<name>RS4_STRS2</name>
<dbReference type="EMBL" id="CP000408">
    <property type="protein sequence ID" value="ABP93314.1"/>
    <property type="molecule type" value="Genomic_DNA"/>
</dbReference>
<dbReference type="SMR" id="A4W4M5"/>
<dbReference type="KEGG" id="ssv:SSU98_2156"/>
<dbReference type="HOGENOM" id="CLU_092403_0_1_9"/>
<dbReference type="GO" id="GO:0015935">
    <property type="term" value="C:small ribosomal subunit"/>
    <property type="evidence" value="ECO:0007669"/>
    <property type="project" value="InterPro"/>
</dbReference>
<dbReference type="GO" id="GO:0019843">
    <property type="term" value="F:rRNA binding"/>
    <property type="evidence" value="ECO:0007669"/>
    <property type="project" value="UniProtKB-UniRule"/>
</dbReference>
<dbReference type="GO" id="GO:0003735">
    <property type="term" value="F:structural constituent of ribosome"/>
    <property type="evidence" value="ECO:0007669"/>
    <property type="project" value="InterPro"/>
</dbReference>
<dbReference type="GO" id="GO:0042274">
    <property type="term" value="P:ribosomal small subunit biogenesis"/>
    <property type="evidence" value="ECO:0007669"/>
    <property type="project" value="TreeGrafter"/>
</dbReference>
<dbReference type="GO" id="GO:0006412">
    <property type="term" value="P:translation"/>
    <property type="evidence" value="ECO:0007669"/>
    <property type="project" value="UniProtKB-UniRule"/>
</dbReference>
<dbReference type="CDD" id="cd00165">
    <property type="entry name" value="S4"/>
    <property type="match status" value="1"/>
</dbReference>
<dbReference type="FunFam" id="3.10.290.10:FF:000001">
    <property type="entry name" value="30S ribosomal protein S4"/>
    <property type="match status" value="1"/>
</dbReference>
<dbReference type="Gene3D" id="1.10.1050.10">
    <property type="entry name" value="Ribosomal Protein S4 Delta 41, Chain A, domain 1"/>
    <property type="match status" value="1"/>
</dbReference>
<dbReference type="Gene3D" id="3.10.290.10">
    <property type="entry name" value="RNA-binding S4 domain"/>
    <property type="match status" value="1"/>
</dbReference>
<dbReference type="HAMAP" id="MF_01306_B">
    <property type="entry name" value="Ribosomal_uS4_B"/>
    <property type="match status" value="1"/>
</dbReference>
<dbReference type="InterPro" id="IPR022801">
    <property type="entry name" value="Ribosomal_uS4"/>
</dbReference>
<dbReference type="InterPro" id="IPR005709">
    <property type="entry name" value="Ribosomal_uS4_bac-type"/>
</dbReference>
<dbReference type="InterPro" id="IPR018079">
    <property type="entry name" value="Ribosomal_uS4_CS"/>
</dbReference>
<dbReference type="InterPro" id="IPR001912">
    <property type="entry name" value="Ribosomal_uS4_N"/>
</dbReference>
<dbReference type="InterPro" id="IPR002942">
    <property type="entry name" value="S4_RNA-bd"/>
</dbReference>
<dbReference type="InterPro" id="IPR036986">
    <property type="entry name" value="S4_RNA-bd_sf"/>
</dbReference>
<dbReference type="NCBIfam" id="NF003717">
    <property type="entry name" value="PRK05327.1"/>
    <property type="match status" value="1"/>
</dbReference>
<dbReference type="NCBIfam" id="TIGR01017">
    <property type="entry name" value="rpsD_bact"/>
    <property type="match status" value="1"/>
</dbReference>
<dbReference type="PANTHER" id="PTHR11831">
    <property type="entry name" value="30S 40S RIBOSOMAL PROTEIN"/>
    <property type="match status" value="1"/>
</dbReference>
<dbReference type="PANTHER" id="PTHR11831:SF4">
    <property type="entry name" value="SMALL RIBOSOMAL SUBUNIT PROTEIN US4M"/>
    <property type="match status" value="1"/>
</dbReference>
<dbReference type="Pfam" id="PF00163">
    <property type="entry name" value="Ribosomal_S4"/>
    <property type="match status" value="1"/>
</dbReference>
<dbReference type="Pfam" id="PF01479">
    <property type="entry name" value="S4"/>
    <property type="match status" value="1"/>
</dbReference>
<dbReference type="SMART" id="SM01390">
    <property type="entry name" value="Ribosomal_S4"/>
    <property type="match status" value="1"/>
</dbReference>
<dbReference type="SMART" id="SM00363">
    <property type="entry name" value="S4"/>
    <property type="match status" value="1"/>
</dbReference>
<dbReference type="SUPFAM" id="SSF55174">
    <property type="entry name" value="Alpha-L RNA-binding motif"/>
    <property type="match status" value="1"/>
</dbReference>
<dbReference type="PROSITE" id="PS00632">
    <property type="entry name" value="RIBOSOMAL_S4"/>
    <property type="match status" value="1"/>
</dbReference>
<dbReference type="PROSITE" id="PS50889">
    <property type="entry name" value="S4"/>
    <property type="match status" value="1"/>
</dbReference>
<sequence length="203" mass="23118">MSRYTGPSWKQARRLGLSLTGTGKELARRNYVPGQHGPNNRSKLSEYGLQLAEKQKLRFSYGLGEKQFRNLFVQATKIKQGTLGFNFMLLLERRLDNVVYRLGLATTRRQARQFVNHGHILVDGKRVDIPSYRVEVGQVISVREKSIKVPAILEAVEATLGRPAFVSFDAEKLEGSLTRLPERDEINPEINEALVVEFYNKML</sequence>
<evidence type="ECO:0000255" key="1">
    <source>
        <dbReference type="HAMAP-Rule" id="MF_01306"/>
    </source>
</evidence>
<evidence type="ECO:0000305" key="2"/>
<reference key="1">
    <citation type="journal article" date="2007" name="PLoS ONE">
        <title>A glimpse of streptococcal toxic shock syndrome from comparative genomics of S. suis 2 Chinese isolates.</title>
        <authorList>
            <person name="Chen C."/>
            <person name="Tang J."/>
            <person name="Dong W."/>
            <person name="Wang C."/>
            <person name="Feng Y."/>
            <person name="Wang J."/>
            <person name="Zheng F."/>
            <person name="Pan X."/>
            <person name="Liu D."/>
            <person name="Li M."/>
            <person name="Song Y."/>
            <person name="Zhu X."/>
            <person name="Sun H."/>
            <person name="Feng T."/>
            <person name="Guo Z."/>
            <person name="Ju A."/>
            <person name="Ge J."/>
            <person name="Dong Y."/>
            <person name="Sun W."/>
            <person name="Jiang Y."/>
            <person name="Wang J."/>
            <person name="Yan J."/>
            <person name="Yang H."/>
            <person name="Wang X."/>
            <person name="Gao G.F."/>
            <person name="Yang R."/>
            <person name="Wang J."/>
            <person name="Yu J."/>
        </authorList>
    </citation>
    <scope>NUCLEOTIDE SEQUENCE [LARGE SCALE GENOMIC DNA]</scope>
    <source>
        <strain>98HAH33</strain>
    </source>
</reference>
<comment type="function">
    <text evidence="1">One of the primary rRNA binding proteins, it binds directly to 16S rRNA where it nucleates assembly of the body of the 30S subunit.</text>
</comment>
<comment type="function">
    <text evidence="1">With S5 and S12 plays an important role in translational accuracy.</text>
</comment>
<comment type="subunit">
    <text evidence="1">Part of the 30S ribosomal subunit. Contacts protein S5. The interaction surface between S4 and S5 is involved in control of translational fidelity.</text>
</comment>
<comment type="similarity">
    <text evidence="1">Belongs to the universal ribosomal protein uS4 family.</text>
</comment>
<keyword id="KW-0687">Ribonucleoprotein</keyword>
<keyword id="KW-0689">Ribosomal protein</keyword>
<keyword id="KW-0694">RNA-binding</keyword>
<keyword id="KW-0699">rRNA-binding</keyword>
<accession>A4W4M5</accession>
<organism>
    <name type="scientific">Streptococcus suis (strain 98HAH33)</name>
    <dbReference type="NCBI Taxonomy" id="391296"/>
    <lineage>
        <taxon>Bacteria</taxon>
        <taxon>Bacillati</taxon>
        <taxon>Bacillota</taxon>
        <taxon>Bacilli</taxon>
        <taxon>Lactobacillales</taxon>
        <taxon>Streptococcaceae</taxon>
        <taxon>Streptococcus</taxon>
    </lineage>
</organism>
<proteinExistence type="inferred from homology"/>
<gene>
    <name evidence="1" type="primary">rpsD</name>
    <name type="ordered locus">SSU98_2156</name>
</gene>
<feature type="chain" id="PRO_0000322341" description="Small ribosomal subunit protein uS4">
    <location>
        <begin position="1"/>
        <end position="203"/>
    </location>
</feature>
<feature type="domain" description="S4 RNA-binding" evidence="1">
    <location>
        <begin position="93"/>
        <end position="156"/>
    </location>
</feature>
<protein>
    <recommendedName>
        <fullName evidence="1">Small ribosomal subunit protein uS4</fullName>
    </recommendedName>
    <alternativeName>
        <fullName evidence="2">30S ribosomal protein S4</fullName>
    </alternativeName>
</protein>